<evidence type="ECO:0000255" key="1">
    <source>
        <dbReference type="HAMAP-Rule" id="MF_00801"/>
    </source>
</evidence>
<protein>
    <recommendedName>
        <fullName evidence="1">Endonuclease V</fullName>
        <ecNumber evidence="1">3.1.21.7</ecNumber>
    </recommendedName>
    <alternativeName>
        <fullName evidence="1">Deoxyinosine 3'endonuclease</fullName>
    </alternativeName>
    <alternativeName>
        <fullName evidence="1">Deoxyribonuclease V</fullName>
        <shortName evidence="1">DNase V</shortName>
    </alternativeName>
</protein>
<name>NFI_SACS2</name>
<reference key="1">
    <citation type="journal article" date="2001" name="Proc. Natl. Acad. Sci. U.S.A.">
        <title>The complete genome of the crenarchaeon Sulfolobus solfataricus P2.</title>
        <authorList>
            <person name="She Q."/>
            <person name="Singh R.K."/>
            <person name="Confalonieri F."/>
            <person name="Zivanovic Y."/>
            <person name="Allard G."/>
            <person name="Awayez M.J."/>
            <person name="Chan-Weiher C.C.-Y."/>
            <person name="Clausen I.G."/>
            <person name="Curtis B.A."/>
            <person name="De Moors A."/>
            <person name="Erauso G."/>
            <person name="Fletcher C."/>
            <person name="Gordon P.M.K."/>
            <person name="Heikamp-de Jong I."/>
            <person name="Jeffries A.C."/>
            <person name="Kozera C.J."/>
            <person name="Medina N."/>
            <person name="Peng X."/>
            <person name="Thi-Ngoc H.P."/>
            <person name="Redder P."/>
            <person name="Schenk M.E."/>
            <person name="Theriault C."/>
            <person name="Tolstrup N."/>
            <person name="Charlebois R.L."/>
            <person name="Doolittle W.F."/>
            <person name="Duguet M."/>
            <person name="Gaasterland T."/>
            <person name="Garrett R.A."/>
            <person name="Ragan M.A."/>
            <person name="Sensen C.W."/>
            <person name="Van der Oost J."/>
        </authorList>
    </citation>
    <scope>NUCLEOTIDE SEQUENCE [LARGE SCALE GENOMIC DNA]</scope>
    <source>
        <strain>ATCC 35092 / DSM 1617 / JCM 11322 / P2</strain>
    </source>
</reference>
<organism>
    <name type="scientific">Saccharolobus solfataricus (strain ATCC 35092 / DSM 1617 / JCM 11322 / P2)</name>
    <name type="common">Sulfolobus solfataricus</name>
    <dbReference type="NCBI Taxonomy" id="273057"/>
    <lineage>
        <taxon>Archaea</taxon>
        <taxon>Thermoproteota</taxon>
        <taxon>Thermoprotei</taxon>
        <taxon>Sulfolobales</taxon>
        <taxon>Sulfolobaceae</taxon>
        <taxon>Saccharolobus</taxon>
    </lineage>
</organism>
<gene>
    <name evidence="1" type="primary">nfi</name>
    <name type="ordered locus">SSO2454</name>
</gene>
<feature type="chain" id="PRO_0000159695" description="Endonuclease V">
    <location>
        <begin position="1"/>
        <end position="198"/>
    </location>
</feature>
<feature type="binding site" evidence="1">
    <location>
        <position position="38"/>
    </location>
    <ligand>
        <name>Mg(2+)</name>
        <dbReference type="ChEBI" id="CHEBI:18420"/>
    </ligand>
</feature>
<feature type="binding site" evidence="1">
    <location>
        <position position="101"/>
    </location>
    <ligand>
        <name>Mg(2+)</name>
        <dbReference type="ChEBI" id="CHEBI:18420"/>
    </ligand>
</feature>
<feature type="site" description="Interaction with target DNA" evidence="1">
    <location>
        <position position="73"/>
    </location>
</feature>
<sequence>MVEKHLLEFLEKLQFLISKNVKISHYGIENVKKICGVDIAYKGNLGFSVGVSMDINSGDYNYKSYVGEVNFPYIPGFLFMREAPLMIKAIEGLDCHLLLVDGHGIAHPRKSGIAAVIGVLLDFPTIGVAKSRLTGDLVNESEITYVYLNGEKVGVKFGRYFYSPGNKVDLQDCIELGKRGYPKVLKIADMLTKKIKKE</sequence>
<dbReference type="EC" id="3.1.21.7" evidence="1"/>
<dbReference type="EMBL" id="AE006641">
    <property type="protein sequence ID" value="AAK42594.1"/>
    <property type="molecule type" value="Genomic_DNA"/>
</dbReference>
<dbReference type="PIR" id="C90417">
    <property type="entry name" value="C90417"/>
</dbReference>
<dbReference type="RefSeq" id="WP_010923862.1">
    <property type="nucleotide sequence ID" value="NC_002754.1"/>
</dbReference>
<dbReference type="SMR" id="Q97VZ6"/>
<dbReference type="FunCoup" id="Q97VZ6">
    <property type="interactions" value="5"/>
</dbReference>
<dbReference type="STRING" id="273057.SSO2454"/>
<dbReference type="PaxDb" id="273057-SSO2454"/>
<dbReference type="EnsemblBacteria" id="AAK42594">
    <property type="protein sequence ID" value="AAK42594"/>
    <property type="gene ID" value="SSO2454"/>
</dbReference>
<dbReference type="GeneID" id="84060724"/>
<dbReference type="KEGG" id="sso:SSO2454"/>
<dbReference type="PATRIC" id="fig|273057.12.peg.2532"/>
<dbReference type="eggNOG" id="arCOG00929">
    <property type="taxonomic scope" value="Archaea"/>
</dbReference>
<dbReference type="HOGENOM" id="CLU_047631_1_1_2"/>
<dbReference type="InParanoid" id="Q97VZ6"/>
<dbReference type="PhylomeDB" id="Q97VZ6"/>
<dbReference type="Proteomes" id="UP000001974">
    <property type="component" value="Chromosome"/>
</dbReference>
<dbReference type="GO" id="GO:0005737">
    <property type="term" value="C:cytoplasm"/>
    <property type="evidence" value="ECO:0007669"/>
    <property type="project" value="UniProtKB-SubCell"/>
</dbReference>
<dbReference type="GO" id="GO:0043737">
    <property type="term" value="F:deoxyribonuclease V activity"/>
    <property type="evidence" value="ECO:0007669"/>
    <property type="project" value="UniProtKB-UniRule"/>
</dbReference>
<dbReference type="GO" id="GO:0000287">
    <property type="term" value="F:magnesium ion binding"/>
    <property type="evidence" value="ECO:0007669"/>
    <property type="project" value="UniProtKB-UniRule"/>
</dbReference>
<dbReference type="GO" id="GO:0016891">
    <property type="term" value="F:RNA endonuclease activity, producing 5'-phosphomonoesters"/>
    <property type="evidence" value="ECO:0000318"/>
    <property type="project" value="GO_Central"/>
</dbReference>
<dbReference type="GO" id="GO:0003727">
    <property type="term" value="F:single-stranded RNA binding"/>
    <property type="evidence" value="ECO:0000318"/>
    <property type="project" value="GO_Central"/>
</dbReference>
<dbReference type="GO" id="GO:0006281">
    <property type="term" value="P:DNA repair"/>
    <property type="evidence" value="ECO:0007669"/>
    <property type="project" value="UniProtKB-UniRule"/>
</dbReference>
<dbReference type="CDD" id="cd06559">
    <property type="entry name" value="Endonuclease_V"/>
    <property type="match status" value="1"/>
</dbReference>
<dbReference type="FunFam" id="3.30.2170.10:FF:000006">
    <property type="entry name" value="Endonuclease V"/>
    <property type="match status" value="1"/>
</dbReference>
<dbReference type="Gene3D" id="3.30.2170.10">
    <property type="entry name" value="archaeoglobus fulgidus dsm 4304 superfamily"/>
    <property type="match status" value="1"/>
</dbReference>
<dbReference type="HAMAP" id="MF_00801">
    <property type="entry name" value="Endonuclease_5"/>
    <property type="match status" value="1"/>
</dbReference>
<dbReference type="InterPro" id="IPR007581">
    <property type="entry name" value="Endonuclease-V"/>
</dbReference>
<dbReference type="PANTHER" id="PTHR28511">
    <property type="entry name" value="ENDONUCLEASE V"/>
    <property type="match status" value="1"/>
</dbReference>
<dbReference type="PANTHER" id="PTHR28511:SF1">
    <property type="entry name" value="ENDONUCLEASE V"/>
    <property type="match status" value="1"/>
</dbReference>
<dbReference type="Pfam" id="PF04493">
    <property type="entry name" value="Endonuclease_5"/>
    <property type="match status" value="1"/>
</dbReference>
<comment type="function">
    <text evidence="1">DNA repair enzyme involved in the repair of deaminated bases. Selectively cleaves double-stranded DNA at the second phosphodiester bond 3' to a deoxyinosine leaving behind the intact lesion on the nicked DNA.</text>
</comment>
<comment type="catalytic activity">
    <reaction evidence="1">
        <text>Endonucleolytic cleavage at apurinic or apyrimidinic sites to products with a 5'-phosphate.</text>
        <dbReference type="EC" id="3.1.21.7"/>
    </reaction>
</comment>
<comment type="cofactor">
    <cofactor evidence="1">
        <name>Mg(2+)</name>
        <dbReference type="ChEBI" id="CHEBI:18420"/>
    </cofactor>
</comment>
<comment type="subcellular location">
    <subcellularLocation>
        <location evidence="1">Cytoplasm</location>
    </subcellularLocation>
</comment>
<comment type="similarity">
    <text evidence="1">Belongs to the endonuclease V family.</text>
</comment>
<accession>Q97VZ6</accession>
<keyword id="KW-0963">Cytoplasm</keyword>
<keyword id="KW-0227">DNA damage</keyword>
<keyword id="KW-0234">DNA repair</keyword>
<keyword id="KW-0255">Endonuclease</keyword>
<keyword id="KW-0378">Hydrolase</keyword>
<keyword id="KW-0460">Magnesium</keyword>
<keyword id="KW-0479">Metal-binding</keyword>
<keyword id="KW-0540">Nuclease</keyword>
<keyword id="KW-1185">Reference proteome</keyword>
<proteinExistence type="inferred from homology"/>